<name>MSCL_LEUMM</name>
<sequence>MLSEFKAFIMRGNVLDLAVGVIIGGAFTGLVKSLTTNLIGPIIAFATGGTTDLDQLQLVITKTLTFKYGAFLNDVINFLITAFVVFLIVKFINRLFKANKQEEAKANPELEILTEIRDLLDAEKKAQ</sequence>
<comment type="function">
    <text evidence="1">Channel that opens in response to stretch forces in the membrane lipid bilayer. May participate in the regulation of osmotic pressure changes within the cell.</text>
</comment>
<comment type="subunit">
    <text evidence="1">Homopentamer.</text>
</comment>
<comment type="subcellular location">
    <subcellularLocation>
        <location evidence="1">Cell membrane</location>
        <topology evidence="1">Multi-pass membrane protein</topology>
    </subcellularLocation>
</comment>
<comment type="similarity">
    <text evidence="1">Belongs to the MscL family.</text>
</comment>
<proteinExistence type="inferred from homology"/>
<evidence type="ECO:0000255" key="1">
    <source>
        <dbReference type="HAMAP-Rule" id="MF_00115"/>
    </source>
</evidence>
<accession>Q03YJ0</accession>
<protein>
    <recommendedName>
        <fullName evidence="1">Large-conductance mechanosensitive channel</fullName>
    </recommendedName>
</protein>
<dbReference type="EMBL" id="CP000414">
    <property type="protein sequence ID" value="ABJ61732.1"/>
    <property type="molecule type" value="Genomic_DNA"/>
</dbReference>
<dbReference type="RefSeq" id="WP_011679432.1">
    <property type="nucleotide sequence ID" value="NC_008531.1"/>
</dbReference>
<dbReference type="SMR" id="Q03YJ0"/>
<dbReference type="EnsemblBacteria" id="ABJ61732">
    <property type="protein sequence ID" value="ABJ61732"/>
    <property type="gene ID" value="LEUM_0618"/>
</dbReference>
<dbReference type="GeneID" id="29576007"/>
<dbReference type="KEGG" id="lme:LEUM_0618"/>
<dbReference type="eggNOG" id="COG1970">
    <property type="taxonomic scope" value="Bacteria"/>
</dbReference>
<dbReference type="HOGENOM" id="CLU_095787_0_0_9"/>
<dbReference type="Proteomes" id="UP000000362">
    <property type="component" value="Chromosome"/>
</dbReference>
<dbReference type="GO" id="GO:0005886">
    <property type="term" value="C:plasma membrane"/>
    <property type="evidence" value="ECO:0007669"/>
    <property type="project" value="UniProtKB-SubCell"/>
</dbReference>
<dbReference type="GO" id="GO:0008381">
    <property type="term" value="F:mechanosensitive monoatomic ion channel activity"/>
    <property type="evidence" value="ECO:0007669"/>
    <property type="project" value="UniProtKB-UniRule"/>
</dbReference>
<dbReference type="Gene3D" id="1.10.1200.120">
    <property type="entry name" value="Large-conductance mechanosensitive channel, MscL, domain 1"/>
    <property type="match status" value="1"/>
</dbReference>
<dbReference type="HAMAP" id="MF_00115">
    <property type="entry name" value="MscL"/>
    <property type="match status" value="1"/>
</dbReference>
<dbReference type="InterPro" id="IPR019823">
    <property type="entry name" value="Mechanosensitive_channel_CS"/>
</dbReference>
<dbReference type="InterPro" id="IPR001185">
    <property type="entry name" value="MS_channel"/>
</dbReference>
<dbReference type="InterPro" id="IPR037673">
    <property type="entry name" value="MSC/AndL"/>
</dbReference>
<dbReference type="InterPro" id="IPR036019">
    <property type="entry name" value="MscL_channel"/>
</dbReference>
<dbReference type="NCBIfam" id="TIGR00220">
    <property type="entry name" value="mscL"/>
    <property type="match status" value="1"/>
</dbReference>
<dbReference type="NCBIfam" id="NF001842">
    <property type="entry name" value="PRK00567.1-3"/>
    <property type="match status" value="1"/>
</dbReference>
<dbReference type="PANTHER" id="PTHR30266:SF2">
    <property type="entry name" value="LARGE-CONDUCTANCE MECHANOSENSITIVE CHANNEL"/>
    <property type="match status" value="1"/>
</dbReference>
<dbReference type="PANTHER" id="PTHR30266">
    <property type="entry name" value="MECHANOSENSITIVE CHANNEL MSCL"/>
    <property type="match status" value="1"/>
</dbReference>
<dbReference type="Pfam" id="PF01741">
    <property type="entry name" value="MscL"/>
    <property type="match status" value="1"/>
</dbReference>
<dbReference type="PRINTS" id="PR01264">
    <property type="entry name" value="MECHCHANNEL"/>
</dbReference>
<dbReference type="SUPFAM" id="SSF81330">
    <property type="entry name" value="Gated mechanosensitive channel"/>
    <property type="match status" value="1"/>
</dbReference>
<dbReference type="PROSITE" id="PS01327">
    <property type="entry name" value="MSCL"/>
    <property type="match status" value="1"/>
</dbReference>
<feature type="chain" id="PRO_1000015395" description="Large-conductance mechanosensitive channel">
    <location>
        <begin position="1"/>
        <end position="127"/>
    </location>
</feature>
<feature type="transmembrane region" description="Helical" evidence="1">
    <location>
        <begin position="14"/>
        <end position="34"/>
    </location>
</feature>
<feature type="transmembrane region" description="Helical" evidence="1">
    <location>
        <begin position="69"/>
        <end position="89"/>
    </location>
</feature>
<gene>
    <name evidence="1" type="primary">mscL</name>
    <name type="ordered locus">LEUM_0618</name>
</gene>
<reference key="1">
    <citation type="journal article" date="2006" name="Proc. Natl. Acad. Sci. U.S.A.">
        <title>Comparative genomics of the lactic acid bacteria.</title>
        <authorList>
            <person name="Makarova K.S."/>
            <person name="Slesarev A."/>
            <person name="Wolf Y.I."/>
            <person name="Sorokin A."/>
            <person name="Mirkin B."/>
            <person name="Koonin E.V."/>
            <person name="Pavlov A."/>
            <person name="Pavlova N."/>
            <person name="Karamychev V."/>
            <person name="Polouchine N."/>
            <person name="Shakhova V."/>
            <person name="Grigoriev I."/>
            <person name="Lou Y."/>
            <person name="Rohksar D."/>
            <person name="Lucas S."/>
            <person name="Huang K."/>
            <person name="Goodstein D.M."/>
            <person name="Hawkins T."/>
            <person name="Plengvidhya V."/>
            <person name="Welker D."/>
            <person name="Hughes J."/>
            <person name="Goh Y."/>
            <person name="Benson A."/>
            <person name="Baldwin K."/>
            <person name="Lee J.-H."/>
            <person name="Diaz-Muniz I."/>
            <person name="Dosti B."/>
            <person name="Smeianov V."/>
            <person name="Wechter W."/>
            <person name="Barabote R."/>
            <person name="Lorca G."/>
            <person name="Altermann E."/>
            <person name="Barrangou R."/>
            <person name="Ganesan B."/>
            <person name="Xie Y."/>
            <person name="Rawsthorne H."/>
            <person name="Tamir D."/>
            <person name="Parker C."/>
            <person name="Breidt F."/>
            <person name="Broadbent J.R."/>
            <person name="Hutkins R."/>
            <person name="O'Sullivan D."/>
            <person name="Steele J."/>
            <person name="Unlu G."/>
            <person name="Saier M.H. Jr."/>
            <person name="Klaenhammer T."/>
            <person name="Richardson P."/>
            <person name="Kozyavkin S."/>
            <person name="Weimer B.C."/>
            <person name="Mills D.A."/>
        </authorList>
    </citation>
    <scope>NUCLEOTIDE SEQUENCE [LARGE SCALE GENOMIC DNA]</scope>
    <source>
        <strain>ATCC 8293 / DSM 20343 / BCRC 11652 / CCM 1803 / JCM 6124 / NCDO 523 / NBRC 100496 / NCIMB 8023 / NCTC 12954 / NRRL B-1118 / 37Y</strain>
    </source>
</reference>
<keyword id="KW-1003">Cell membrane</keyword>
<keyword id="KW-0407">Ion channel</keyword>
<keyword id="KW-0406">Ion transport</keyword>
<keyword id="KW-0472">Membrane</keyword>
<keyword id="KW-1185">Reference proteome</keyword>
<keyword id="KW-0812">Transmembrane</keyword>
<keyword id="KW-1133">Transmembrane helix</keyword>
<keyword id="KW-0813">Transport</keyword>
<organism>
    <name type="scientific">Leuconostoc mesenteroides subsp. mesenteroides (strain ATCC 8293 / DSM 20343 / BCRC 11652 / CCM 1803 / JCM 6124 / NCDO 523 / NBRC 100496 / NCIMB 8023 / NCTC 12954 / NRRL B-1118 / 37Y)</name>
    <dbReference type="NCBI Taxonomy" id="203120"/>
    <lineage>
        <taxon>Bacteria</taxon>
        <taxon>Bacillati</taxon>
        <taxon>Bacillota</taxon>
        <taxon>Bacilli</taxon>
        <taxon>Lactobacillales</taxon>
        <taxon>Lactobacillaceae</taxon>
        <taxon>Leuconostoc</taxon>
    </lineage>
</organism>